<reference key="1">
    <citation type="journal article" date="2011" name="Stand. Genomic Sci.">
        <title>Complete genome sequence of Rhodospirillum rubrum type strain (S1).</title>
        <authorList>
            <person name="Munk A.C."/>
            <person name="Copeland A."/>
            <person name="Lucas S."/>
            <person name="Lapidus A."/>
            <person name="Del Rio T.G."/>
            <person name="Barry K."/>
            <person name="Detter J.C."/>
            <person name="Hammon N."/>
            <person name="Israni S."/>
            <person name="Pitluck S."/>
            <person name="Brettin T."/>
            <person name="Bruce D."/>
            <person name="Han C."/>
            <person name="Tapia R."/>
            <person name="Gilna P."/>
            <person name="Schmutz J."/>
            <person name="Larimer F."/>
            <person name="Land M."/>
            <person name="Kyrpides N.C."/>
            <person name="Mavromatis K."/>
            <person name="Richardson P."/>
            <person name="Rohde M."/>
            <person name="Goeker M."/>
            <person name="Klenk H.P."/>
            <person name="Zhang Y."/>
            <person name="Roberts G.P."/>
            <person name="Reslewic S."/>
            <person name="Schwartz D.C."/>
        </authorList>
    </citation>
    <scope>NUCLEOTIDE SEQUENCE [LARGE SCALE GENOMIC DNA]</scope>
    <source>
        <strain>ATCC 11170 / ATH 1.1.1 / DSM 467 / LMG 4362 / NCIMB 8255 / S1</strain>
    </source>
</reference>
<name>PLSX_RHORT</name>
<feature type="chain" id="PRO_1000057176" description="Phosphate acyltransferase">
    <location>
        <begin position="1"/>
        <end position="349"/>
    </location>
</feature>
<sequence>MSNSLVISVDAMGGDDAPDMVVDGVKLARKRFPDVRFLLFGDEARIGPLVAGDSALSAVCTIRHTASAVSGDAKPSQAVRSGRQSSLWLSIEAVKKGEAAGVVSAGNTGAFMAMAKLILRTLPGIDRPAIATLLPTLRGESVVLDLGANAECNANNLVEFAIMGEVFARTVLSLDRPTVGIMNIGSESGKGTDTVRDASARLQDSALPIRFMGFVEGDDLGKGTVDVIVTDGFTGNVMLKTAEGTAKLYSQFLRNAFLSSLLARLGYLLSRSALQKVKARTDPRRYNGAMFLGLDGVAVKSHGGTDALGFSNALAVAIDLVRQGFNESIKDEIAKVQVLPSTVSVSHAV</sequence>
<organism>
    <name type="scientific">Rhodospirillum rubrum (strain ATCC 11170 / ATH 1.1.1 / DSM 467 / LMG 4362 / NCIMB 8255 / S1)</name>
    <dbReference type="NCBI Taxonomy" id="269796"/>
    <lineage>
        <taxon>Bacteria</taxon>
        <taxon>Pseudomonadati</taxon>
        <taxon>Pseudomonadota</taxon>
        <taxon>Alphaproteobacteria</taxon>
        <taxon>Rhodospirillales</taxon>
        <taxon>Rhodospirillaceae</taxon>
        <taxon>Rhodospirillum</taxon>
    </lineage>
</organism>
<accession>Q2RTS9</accession>
<protein>
    <recommendedName>
        <fullName evidence="1">Phosphate acyltransferase</fullName>
        <ecNumber evidence="1">2.3.1.274</ecNumber>
    </recommendedName>
    <alternativeName>
        <fullName evidence="1">Acyl-ACP phosphotransacylase</fullName>
    </alternativeName>
    <alternativeName>
        <fullName evidence="1">Acyl-[acyl-carrier-protein]--phosphate acyltransferase</fullName>
    </alternativeName>
    <alternativeName>
        <fullName evidence="1">Phosphate-acyl-ACP acyltransferase</fullName>
    </alternativeName>
</protein>
<comment type="function">
    <text evidence="1">Catalyzes the reversible formation of acyl-phosphate (acyl-PO(4)) from acyl-[acyl-carrier-protein] (acyl-ACP). This enzyme utilizes acyl-ACP as fatty acyl donor, but not acyl-CoA.</text>
</comment>
<comment type="catalytic activity">
    <reaction evidence="1">
        <text>a fatty acyl-[ACP] + phosphate = an acyl phosphate + holo-[ACP]</text>
        <dbReference type="Rhea" id="RHEA:42292"/>
        <dbReference type="Rhea" id="RHEA-COMP:9685"/>
        <dbReference type="Rhea" id="RHEA-COMP:14125"/>
        <dbReference type="ChEBI" id="CHEBI:43474"/>
        <dbReference type="ChEBI" id="CHEBI:59918"/>
        <dbReference type="ChEBI" id="CHEBI:64479"/>
        <dbReference type="ChEBI" id="CHEBI:138651"/>
        <dbReference type="EC" id="2.3.1.274"/>
    </reaction>
</comment>
<comment type="pathway">
    <text evidence="1">Lipid metabolism; phospholipid metabolism.</text>
</comment>
<comment type="subunit">
    <text evidence="1">Homodimer. Probably interacts with PlsY.</text>
</comment>
<comment type="subcellular location">
    <subcellularLocation>
        <location evidence="1">Cytoplasm</location>
    </subcellularLocation>
    <text evidence="1">Associated with the membrane possibly through PlsY.</text>
</comment>
<comment type="similarity">
    <text evidence="1">Belongs to the PlsX family.</text>
</comment>
<evidence type="ECO:0000255" key="1">
    <source>
        <dbReference type="HAMAP-Rule" id="MF_00019"/>
    </source>
</evidence>
<keyword id="KW-0963">Cytoplasm</keyword>
<keyword id="KW-0444">Lipid biosynthesis</keyword>
<keyword id="KW-0443">Lipid metabolism</keyword>
<keyword id="KW-0594">Phospholipid biosynthesis</keyword>
<keyword id="KW-1208">Phospholipid metabolism</keyword>
<keyword id="KW-1185">Reference proteome</keyword>
<keyword id="KW-0808">Transferase</keyword>
<proteinExistence type="inferred from homology"/>
<dbReference type="EC" id="2.3.1.274" evidence="1"/>
<dbReference type="EMBL" id="CP000230">
    <property type="protein sequence ID" value="ABC22466.1"/>
    <property type="molecule type" value="Genomic_DNA"/>
</dbReference>
<dbReference type="RefSeq" id="WP_011389356.1">
    <property type="nucleotide sequence ID" value="NC_007643.1"/>
</dbReference>
<dbReference type="RefSeq" id="YP_426753.1">
    <property type="nucleotide sequence ID" value="NC_007643.1"/>
</dbReference>
<dbReference type="SMR" id="Q2RTS9"/>
<dbReference type="STRING" id="269796.Rru_A1666"/>
<dbReference type="EnsemblBacteria" id="ABC22466">
    <property type="protein sequence ID" value="ABC22466"/>
    <property type="gene ID" value="Rru_A1666"/>
</dbReference>
<dbReference type="KEGG" id="rru:Rru_A1666"/>
<dbReference type="PATRIC" id="fig|269796.9.peg.1744"/>
<dbReference type="eggNOG" id="COG0416">
    <property type="taxonomic scope" value="Bacteria"/>
</dbReference>
<dbReference type="HOGENOM" id="CLU_039379_1_0_5"/>
<dbReference type="PhylomeDB" id="Q2RTS9"/>
<dbReference type="UniPathway" id="UPA00085"/>
<dbReference type="Proteomes" id="UP000001929">
    <property type="component" value="Chromosome"/>
</dbReference>
<dbReference type="GO" id="GO:0005737">
    <property type="term" value="C:cytoplasm"/>
    <property type="evidence" value="ECO:0007669"/>
    <property type="project" value="UniProtKB-SubCell"/>
</dbReference>
<dbReference type="GO" id="GO:0043811">
    <property type="term" value="F:phosphate:acyl-[acyl carrier protein] acyltransferase activity"/>
    <property type="evidence" value="ECO:0007669"/>
    <property type="project" value="UniProtKB-UniRule"/>
</dbReference>
<dbReference type="GO" id="GO:0006633">
    <property type="term" value="P:fatty acid biosynthetic process"/>
    <property type="evidence" value="ECO:0007669"/>
    <property type="project" value="UniProtKB-UniRule"/>
</dbReference>
<dbReference type="GO" id="GO:0008654">
    <property type="term" value="P:phospholipid biosynthetic process"/>
    <property type="evidence" value="ECO:0007669"/>
    <property type="project" value="UniProtKB-KW"/>
</dbReference>
<dbReference type="Gene3D" id="3.40.718.10">
    <property type="entry name" value="Isopropylmalate Dehydrogenase"/>
    <property type="match status" value="1"/>
</dbReference>
<dbReference type="HAMAP" id="MF_00019">
    <property type="entry name" value="PlsX"/>
    <property type="match status" value="1"/>
</dbReference>
<dbReference type="InterPro" id="IPR003664">
    <property type="entry name" value="FA_synthesis"/>
</dbReference>
<dbReference type="InterPro" id="IPR012281">
    <property type="entry name" value="Phospholipid_synth_PlsX-like"/>
</dbReference>
<dbReference type="NCBIfam" id="TIGR00182">
    <property type="entry name" value="plsX"/>
    <property type="match status" value="1"/>
</dbReference>
<dbReference type="PANTHER" id="PTHR30100">
    <property type="entry name" value="FATTY ACID/PHOSPHOLIPID SYNTHESIS PROTEIN PLSX"/>
    <property type="match status" value="1"/>
</dbReference>
<dbReference type="PANTHER" id="PTHR30100:SF1">
    <property type="entry name" value="PHOSPHATE ACYLTRANSFERASE"/>
    <property type="match status" value="1"/>
</dbReference>
<dbReference type="Pfam" id="PF02504">
    <property type="entry name" value="FA_synthesis"/>
    <property type="match status" value="1"/>
</dbReference>
<dbReference type="PIRSF" id="PIRSF002465">
    <property type="entry name" value="Phsphlp_syn_PlsX"/>
    <property type="match status" value="1"/>
</dbReference>
<dbReference type="SUPFAM" id="SSF53659">
    <property type="entry name" value="Isocitrate/Isopropylmalate dehydrogenase-like"/>
    <property type="match status" value="1"/>
</dbReference>
<gene>
    <name evidence="1" type="primary">plsX</name>
    <name type="ordered locus">Rru_A1666</name>
</gene>